<organism>
    <name type="scientific">Deinococcus geothermalis (strain DSM 11300 / CIP 105573 / AG-3a)</name>
    <dbReference type="NCBI Taxonomy" id="319795"/>
    <lineage>
        <taxon>Bacteria</taxon>
        <taxon>Thermotogati</taxon>
        <taxon>Deinococcota</taxon>
        <taxon>Deinococci</taxon>
        <taxon>Deinococcales</taxon>
        <taxon>Deinococcaceae</taxon>
        <taxon>Deinococcus</taxon>
    </lineage>
</organism>
<protein>
    <recommendedName>
        <fullName evidence="1">Pantothenate synthetase</fullName>
        <shortName evidence="1">PS</shortName>
        <ecNumber evidence="1">6.3.2.1</ecNumber>
    </recommendedName>
    <alternativeName>
        <fullName evidence="1">Pantoate--beta-alanine ligase</fullName>
    </alternativeName>
    <alternativeName>
        <fullName evidence="1">Pantoate-activating enzyme</fullName>
    </alternativeName>
</protein>
<evidence type="ECO:0000255" key="1">
    <source>
        <dbReference type="HAMAP-Rule" id="MF_00158"/>
    </source>
</evidence>
<reference key="1">
    <citation type="submission" date="2006-04" db="EMBL/GenBank/DDBJ databases">
        <title>Complete sequence of chromosome of Deinococcus geothermalis DSM 11300.</title>
        <authorList>
            <person name="Copeland A."/>
            <person name="Lucas S."/>
            <person name="Lapidus A."/>
            <person name="Barry K."/>
            <person name="Detter J.C."/>
            <person name="Glavina del Rio T."/>
            <person name="Hammon N."/>
            <person name="Israni S."/>
            <person name="Dalin E."/>
            <person name="Tice H."/>
            <person name="Pitluck S."/>
            <person name="Brettin T."/>
            <person name="Bruce D."/>
            <person name="Han C."/>
            <person name="Tapia R."/>
            <person name="Saunders E."/>
            <person name="Gilna P."/>
            <person name="Schmutz J."/>
            <person name="Larimer F."/>
            <person name="Land M."/>
            <person name="Hauser L."/>
            <person name="Kyrpides N."/>
            <person name="Kim E."/>
            <person name="Daly M.J."/>
            <person name="Fredrickson J.K."/>
            <person name="Makarova K.S."/>
            <person name="Gaidamakova E.K."/>
            <person name="Zhai M."/>
            <person name="Richardson P."/>
        </authorList>
    </citation>
    <scope>NUCLEOTIDE SEQUENCE [LARGE SCALE GENOMIC DNA]</scope>
    <source>
        <strain>DSM 11300 / CIP 105573 / AG-3a</strain>
    </source>
</reference>
<sequence>MNRTATRVLSSIEEVREALAGPGRVGLVPTMGYLHEGHAALIRRARAECDTVVLSVFVNPRQFGVNEDLSRYPRDLNRDLAVAEAAGADLLFHPDVATMYPAGYATTVAVGGVSEPLEGSSRPGHFDGVATVVLKLLNIVQPERAYFGEKDWQQLAVVRRMVRDLNVPVQIVGVPTVREPSGLALSSRNSYLTPEQQARAAILSRALQAVQAAAAAGERDTARLRQAGLAVLAEEPEIELDYLAVVDGDMREKAHVENDPLTRVLVAARLFGVRLIDNVPLSPAERRLSERESRNT</sequence>
<feature type="chain" id="PRO_0000305437" description="Pantothenate synthetase">
    <location>
        <begin position="1"/>
        <end position="296"/>
    </location>
</feature>
<feature type="active site" description="Proton donor" evidence="1">
    <location>
        <position position="38"/>
    </location>
</feature>
<feature type="binding site" evidence="1">
    <location>
        <begin position="31"/>
        <end position="38"/>
    </location>
    <ligand>
        <name>ATP</name>
        <dbReference type="ChEBI" id="CHEBI:30616"/>
    </ligand>
</feature>
<feature type="binding site" evidence="1">
    <location>
        <position position="62"/>
    </location>
    <ligand>
        <name>(R)-pantoate</name>
        <dbReference type="ChEBI" id="CHEBI:15980"/>
    </ligand>
</feature>
<feature type="binding site" evidence="1">
    <location>
        <position position="62"/>
    </location>
    <ligand>
        <name>beta-alanine</name>
        <dbReference type="ChEBI" id="CHEBI:57966"/>
    </ligand>
</feature>
<feature type="binding site" evidence="1">
    <location>
        <begin position="148"/>
        <end position="151"/>
    </location>
    <ligand>
        <name>ATP</name>
        <dbReference type="ChEBI" id="CHEBI:30616"/>
    </ligand>
</feature>
<feature type="binding site" evidence="1">
    <location>
        <position position="154"/>
    </location>
    <ligand>
        <name>(R)-pantoate</name>
        <dbReference type="ChEBI" id="CHEBI:15980"/>
    </ligand>
</feature>
<feature type="binding site" evidence="1">
    <location>
        <position position="177"/>
    </location>
    <ligand>
        <name>ATP</name>
        <dbReference type="ChEBI" id="CHEBI:30616"/>
    </ligand>
</feature>
<feature type="binding site" evidence="1">
    <location>
        <begin position="185"/>
        <end position="188"/>
    </location>
    <ligand>
        <name>ATP</name>
        <dbReference type="ChEBI" id="CHEBI:30616"/>
    </ligand>
</feature>
<accession>Q1J0L2</accession>
<name>PANC_DEIGD</name>
<gene>
    <name evidence="1" type="primary">panC</name>
    <name type="ordered locus">Dgeo_0670</name>
</gene>
<keyword id="KW-0067">ATP-binding</keyword>
<keyword id="KW-0963">Cytoplasm</keyword>
<keyword id="KW-0436">Ligase</keyword>
<keyword id="KW-0547">Nucleotide-binding</keyword>
<keyword id="KW-0566">Pantothenate biosynthesis</keyword>
<comment type="function">
    <text evidence="1">Catalyzes the condensation of pantoate with beta-alanine in an ATP-dependent reaction via a pantoyl-adenylate intermediate.</text>
</comment>
<comment type="catalytic activity">
    <reaction evidence="1">
        <text>(R)-pantoate + beta-alanine + ATP = (R)-pantothenate + AMP + diphosphate + H(+)</text>
        <dbReference type="Rhea" id="RHEA:10912"/>
        <dbReference type="ChEBI" id="CHEBI:15378"/>
        <dbReference type="ChEBI" id="CHEBI:15980"/>
        <dbReference type="ChEBI" id="CHEBI:29032"/>
        <dbReference type="ChEBI" id="CHEBI:30616"/>
        <dbReference type="ChEBI" id="CHEBI:33019"/>
        <dbReference type="ChEBI" id="CHEBI:57966"/>
        <dbReference type="ChEBI" id="CHEBI:456215"/>
        <dbReference type="EC" id="6.3.2.1"/>
    </reaction>
</comment>
<comment type="pathway">
    <text evidence="1">Cofactor biosynthesis; (R)-pantothenate biosynthesis; (R)-pantothenate from (R)-pantoate and beta-alanine: step 1/1.</text>
</comment>
<comment type="subunit">
    <text evidence="1">Homodimer.</text>
</comment>
<comment type="subcellular location">
    <subcellularLocation>
        <location evidence="1">Cytoplasm</location>
    </subcellularLocation>
</comment>
<comment type="miscellaneous">
    <text evidence="1">The reaction proceeds by a bi uni uni bi ping pong mechanism.</text>
</comment>
<comment type="similarity">
    <text evidence="1">Belongs to the pantothenate synthetase family.</text>
</comment>
<proteinExistence type="inferred from homology"/>
<dbReference type="EC" id="6.3.2.1" evidence="1"/>
<dbReference type="EMBL" id="CP000359">
    <property type="protein sequence ID" value="ABF44972.1"/>
    <property type="molecule type" value="Genomic_DNA"/>
</dbReference>
<dbReference type="RefSeq" id="WP_011529813.1">
    <property type="nucleotide sequence ID" value="NC_008025.1"/>
</dbReference>
<dbReference type="SMR" id="Q1J0L2"/>
<dbReference type="STRING" id="319795.Dgeo_0670"/>
<dbReference type="KEGG" id="dge:Dgeo_0670"/>
<dbReference type="eggNOG" id="COG0414">
    <property type="taxonomic scope" value="Bacteria"/>
</dbReference>
<dbReference type="HOGENOM" id="CLU_047148_0_0_0"/>
<dbReference type="UniPathway" id="UPA00028">
    <property type="reaction ID" value="UER00005"/>
</dbReference>
<dbReference type="Proteomes" id="UP000002431">
    <property type="component" value="Chromosome"/>
</dbReference>
<dbReference type="GO" id="GO:0005829">
    <property type="term" value="C:cytosol"/>
    <property type="evidence" value="ECO:0007669"/>
    <property type="project" value="TreeGrafter"/>
</dbReference>
<dbReference type="GO" id="GO:0005524">
    <property type="term" value="F:ATP binding"/>
    <property type="evidence" value="ECO:0007669"/>
    <property type="project" value="UniProtKB-KW"/>
</dbReference>
<dbReference type="GO" id="GO:0004592">
    <property type="term" value="F:pantoate-beta-alanine ligase activity"/>
    <property type="evidence" value="ECO:0007669"/>
    <property type="project" value="UniProtKB-UniRule"/>
</dbReference>
<dbReference type="GO" id="GO:0015940">
    <property type="term" value="P:pantothenate biosynthetic process"/>
    <property type="evidence" value="ECO:0007669"/>
    <property type="project" value="UniProtKB-UniRule"/>
</dbReference>
<dbReference type="CDD" id="cd00560">
    <property type="entry name" value="PanC"/>
    <property type="match status" value="1"/>
</dbReference>
<dbReference type="FunFam" id="3.40.50.620:FF:000114">
    <property type="entry name" value="Pantothenate synthetase"/>
    <property type="match status" value="1"/>
</dbReference>
<dbReference type="Gene3D" id="3.40.50.620">
    <property type="entry name" value="HUPs"/>
    <property type="match status" value="1"/>
</dbReference>
<dbReference type="Gene3D" id="3.30.1300.10">
    <property type="entry name" value="Pantoate-beta-alanine ligase, C-terminal domain"/>
    <property type="match status" value="1"/>
</dbReference>
<dbReference type="HAMAP" id="MF_00158">
    <property type="entry name" value="PanC"/>
    <property type="match status" value="1"/>
</dbReference>
<dbReference type="InterPro" id="IPR004821">
    <property type="entry name" value="Cyt_trans-like"/>
</dbReference>
<dbReference type="InterPro" id="IPR003721">
    <property type="entry name" value="Pantoate_ligase"/>
</dbReference>
<dbReference type="InterPro" id="IPR042176">
    <property type="entry name" value="Pantoate_ligase_C"/>
</dbReference>
<dbReference type="InterPro" id="IPR014729">
    <property type="entry name" value="Rossmann-like_a/b/a_fold"/>
</dbReference>
<dbReference type="NCBIfam" id="TIGR00125">
    <property type="entry name" value="cyt_tran_rel"/>
    <property type="match status" value="1"/>
</dbReference>
<dbReference type="NCBIfam" id="TIGR00018">
    <property type="entry name" value="panC"/>
    <property type="match status" value="1"/>
</dbReference>
<dbReference type="PANTHER" id="PTHR21299">
    <property type="entry name" value="CYTIDYLATE KINASE/PANTOATE-BETA-ALANINE LIGASE"/>
    <property type="match status" value="1"/>
</dbReference>
<dbReference type="PANTHER" id="PTHR21299:SF1">
    <property type="entry name" value="PANTOATE--BETA-ALANINE LIGASE"/>
    <property type="match status" value="1"/>
</dbReference>
<dbReference type="Pfam" id="PF02569">
    <property type="entry name" value="Pantoate_ligase"/>
    <property type="match status" value="1"/>
</dbReference>
<dbReference type="SUPFAM" id="SSF52374">
    <property type="entry name" value="Nucleotidylyl transferase"/>
    <property type="match status" value="1"/>
</dbReference>